<comment type="function">
    <text evidence="1">Catalyzes the condensation of (S)-aspartate-beta-semialdehyde [(S)-ASA] and pyruvate to 4-hydroxy-tetrahydrodipicolinate (HTPA).</text>
</comment>
<comment type="catalytic activity">
    <reaction evidence="1">
        <text>L-aspartate 4-semialdehyde + pyruvate = (2S,4S)-4-hydroxy-2,3,4,5-tetrahydrodipicolinate + H2O + H(+)</text>
        <dbReference type="Rhea" id="RHEA:34171"/>
        <dbReference type="ChEBI" id="CHEBI:15361"/>
        <dbReference type="ChEBI" id="CHEBI:15377"/>
        <dbReference type="ChEBI" id="CHEBI:15378"/>
        <dbReference type="ChEBI" id="CHEBI:67139"/>
        <dbReference type="ChEBI" id="CHEBI:537519"/>
        <dbReference type="EC" id="4.3.3.7"/>
    </reaction>
</comment>
<comment type="pathway">
    <text evidence="1">Amino-acid biosynthesis; L-lysine biosynthesis via DAP pathway; (S)-tetrahydrodipicolinate from L-aspartate: step 3/4.</text>
</comment>
<comment type="subunit">
    <text evidence="1">Homotetramer; dimer of dimers.</text>
</comment>
<comment type="subcellular location">
    <subcellularLocation>
        <location evidence="1">Cytoplasm</location>
    </subcellularLocation>
</comment>
<comment type="similarity">
    <text evidence="1">Belongs to the DapA family.</text>
</comment>
<comment type="caution">
    <text evidence="2">Was originally thought to be a dihydrodipicolinate synthase (DHDPS), catalyzing the condensation of (S)-aspartate-beta-semialdehyde [(S)-ASA] and pyruvate to dihydrodipicolinate (DHDP). However, it was shown in E.coli that the product of the enzymatic reaction is not dihydrodipicolinate but in fact (4S)-4-hydroxy-2,3,4,5-tetrahydro-(2S)-dipicolinic acid (HTPA), and that the consecutive dehydration reaction leading to DHDP is not spontaneous but catalyzed by DapB.</text>
</comment>
<evidence type="ECO:0000255" key="1">
    <source>
        <dbReference type="HAMAP-Rule" id="MF_00418"/>
    </source>
</evidence>
<evidence type="ECO:0000305" key="2"/>
<sequence length="296" mass="32422">MNIHFKGTGVAVTTPFNGQTIDYNLFEDHLNFLINNNVEALIINGTTGEGSTLTEDEKLKTIEIAVRVAHGRVPVIAGTGTNNTQATIEHSLKAKALGVDSIMLITPYYNKTNQRGLLAHFTTIADAVELPVLLYNVPARTNMTIEQETVAALAEHPYIYGIKDATGDINYMKTLKSVVPDDFALYSGNDDAVLPFYEAGGDGVISVIANAIPAEFSDIYRTYQVNRHEAERQFNNLLPLINALSVDVNPIPIKALVAYIGYANGELRLPLVPMLEQDTKQLIELYNRIAKGSDLS</sequence>
<dbReference type="EC" id="4.3.3.7" evidence="1"/>
<dbReference type="EMBL" id="AP009484">
    <property type="protein sequence ID" value="BAH17757.1"/>
    <property type="molecule type" value="Genomic_DNA"/>
</dbReference>
<dbReference type="RefSeq" id="WP_012656955.1">
    <property type="nucleotide sequence ID" value="NC_011999.1"/>
</dbReference>
<dbReference type="SMR" id="B9EBZ6"/>
<dbReference type="STRING" id="458233.MCCL_1050"/>
<dbReference type="KEGG" id="mcl:MCCL_1050"/>
<dbReference type="eggNOG" id="COG0329">
    <property type="taxonomic scope" value="Bacteria"/>
</dbReference>
<dbReference type="HOGENOM" id="CLU_049343_7_1_9"/>
<dbReference type="OrthoDB" id="9782828at2"/>
<dbReference type="UniPathway" id="UPA00034">
    <property type="reaction ID" value="UER00017"/>
</dbReference>
<dbReference type="Proteomes" id="UP000001383">
    <property type="component" value="Chromosome"/>
</dbReference>
<dbReference type="GO" id="GO:0005829">
    <property type="term" value="C:cytosol"/>
    <property type="evidence" value="ECO:0007669"/>
    <property type="project" value="TreeGrafter"/>
</dbReference>
<dbReference type="GO" id="GO:0008840">
    <property type="term" value="F:4-hydroxy-tetrahydrodipicolinate synthase activity"/>
    <property type="evidence" value="ECO:0007669"/>
    <property type="project" value="UniProtKB-UniRule"/>
</dbReference>
<dbReference type="GO" id="GO:0019877">
    <property type="term" value="P:diaminopimelate biosynthetic process"/>
    <property type="evidence" value="ECO:0007669"/>
    <property type="project" value="UniProtKB-UniRule"/>
</dbReference>
<dbReference type="GO" id="GO:0009089">
    <property type="term" value="P:lysine biosynthetic process via diaminopimelate"/>
    <property type="evidence" value="ECO:0007669"/>
    <property type="project" value="UniProtKB-UniRule"/>
</dbReference>
<dbReference type="CDD" id="cd00950">
    <property type="entry name" value="DHDPS"/>
    <property type="match status" value="1"/>
</dbReference>
<dbReference type="Gene3D" id="3.20.20.70">
    <property type="entry name" value="Aldolase class I"/>
    <property type="match status" value="1"/>
</dbReference>
<dbReference type="HAMAP" id="MF_00418">
    <property type="entry name" value="DapA"/>
    <property type="match status" value="1"/>
</dbReference>
<dbReference type="InterPro" id="IPR013785">
    <property type="entry name" value="Aldolase_TIM"/>
</dbReference>
<dbReference type="InterPro" id="IPR005263">
    <property type="entry name" value="DapA"/>
</dbReference>
<dbReference type="InterPro" id="IPR002220">
    <property type="entry name" value="DapA-like"/>
</dbReference>
<dbReference type="InterPro" id="IPR020625">
    <property type="entry name" value="Schiff_base-form_aldolases_AS"/>
</dbReference>
<dbReference type="InterPro" id="IPR020624">
    <property type="entry name" value="Schiff_base-form_aldolases_CS"/>
</dbReference>
<dbReference type="NCBIfam" id="TIGR00674">
    <property type="entry name" value="dapA"/>
    <property type="match status" value="1"/>
</dbReference>
<dbReference type="PANTHER" id="PTHR12128:SF66">
    <property type="entry name" value="4-HYDROXY-2-OXOGLUTARATE ALDOLASE, MITOCHONDRIAL"/>
    <property type="match status" value="1"/>
</dbReference>
<dbReference type="PANTHER" id="PTHR12128">
    <property type="entry name" value="DIHYDRODIPICOLINATE SYNTHASE"/>
    <property type="match status" value="1"/>
</dbReference>
<dbReference type="Pfam" id="PF00701">
    <property type="entry name" value="DHDPS"/>
    <property type="match status" value="1"/>
</dbReference>
<dbReference type="PIRSF" id="PIRSF001365">
    <property type="entry name" value="DHDPS"/>
    <property type="match status" value="1"/>
</dbReference>
<dbReference type="PRINTS" id="PR00146">
    <property type="entry name" value="DHPICSNTHASE"/>
</dbReference>
<dbReference type="SMART" id="SM01130">
    <property type="entry name" value="DHDPS"/>
    <property type="match status" value="1"/>
</dbReference>
<dbReference type="SUPFAM" id="SSF51569">
    <property type="entry name" value="Aldolase"/>
    <property type="match status" value="1"/>
</dbReference>
<dbReference type="PROSITE" id="PS00665">
    <property type="entry name" value="DHDPS_1"/>
    <property type="match status" value="1"/>
</dbReference>
<dbReference type="PROSITE" id="PS00666">
    <property type="entry name" value="DHDPS_2"/>
    <property type="match status" value="1"/>
</dbReference>
<proteinExistence type="inferred from homology"/>
<keyword id="KW-0028">Amino-acid biosynthesis</keyword>
<keyword id="KW-0963">Cytoplasm</keyword>
<keyword id="KW-0220">Diaminopimelate biosynthesis</keyword>
<keyword id="KW-0456">Lyase</keyword>
<keyword id="KW-0457">Lysine biosynthesis</keyword>
<keyword id="KW-1185">Reference proteome</keyword>
<keyword id="KW-0704">Schiff base</keyword>
<feature type="chain" id="PRO_1000134871" description="4-hydroxy-tetrahydrodipicolinate synthase">
    <location>
        <begin position="1"/>
        <end position="296"/>
    </location>
</feature>
<feature type="active site" description="Proton donor/acceptor" evidence="1">
    <location>
        <position position="135"/>
    </location>
</feature>
<feature type="active site" description="Schiff-base intermediate with substrate" evidence="1">
    <location>
        <position position="163"/>
    </location>
</feature>
<feature type="binding site" evidence="1">
    <location>
        <position position="47"/>
    </location>
    <ligand>
        <name>pyruvate</name>
        <dbReference type="ChEBI" id="CHEBI:15361"/>
    </ligand>
</feature>
<feature type="binding site" evidence="1">
    <location>
        <position position="205"/>
    </location>
    <ligand>
        <name>pyruvate</name>
        <dbReference type="ChEBI" id="CHEBI:15361"/>
    </ligand>
</feature>
<feature type="site" description="Part of a proton relay during catalysis" evidence="1">
    <location>
        <position position="46"/>
    </location>
</feature>
<feature type="site" description="Part of a proton relay during catalysis" evidence="1">
    <location>
        <position position="109"/>
    </location>
</feature>
<gene>
    <name evidence="1" type="primary">dapA</name>
    <name type="ordered locus">MCCL_1050</name>
</gene>
<organism>
    <name type="scientific">Macrococcus caseolyticus (strain JCSC5402)</name>
    <name type="common">Macrococcoides caseolyticum</name>
    <dbReference type="NCBI Taxonomy" id="458233"/>
    <lineage>
        <taxon>Bacteria</taxon>
        <taxon>Bacillati</taxon>
        <taxon>Bacillota</taxon>
        <taxon>Bacilli</taxon>
        <taxon>Bacillales</taxon>
        <taxon>Staphylococcaceae</taxon>
        <taxon>Macrococcoides</taxon>
    </lineage>
</organism>
<accession>B9EBZ6</accession>
<name>DAPA_MACCJ</name>
<reference key="1">
    <citation type="journal article" date="2009" name="J. Bacteriol.">
        <title>Complete genome sequence of Macrococcus caseolyticus strain JCSCS5402, reflecting the ancestral genome of the human-pathogenic staphylococci.</title>
        <authorList>
            <person name="Baba T."/>
            <person name="Kuwahara-Arai K."/>
            <person name="Uchiyama I."/>
            <person name="Takeuchi F."/>
            <person name="Ito T."/>
            <person name="Hiramatsu K."/>
        </authorList>
    </citation>
    <scope>NUCLEOTIDE SEQUENCE [LARGE SCALE GENOMIC DNA]</scope>
    <source>
        <strain>JCSC5402</strain>
    </source>
</reference>
<protein>
    <recommendedName>
        <fullName evidence="1">4-hydroxy-tetrahydrodipicolinate synthase</fullName>
        <shortName evidence="1">HTPA synthase</shortName>
        <ecNumber evidence="1">4.3.3.7</ecNumber>
    </recommendedName>
</protein>